<feature type="chain" id="PRO_1000088864" description="Ribosome-binding factor A">
    <location>
        <begin position="1"/>
        <end position="132"/>
    </location>
</feature>
<evidence type="ECO:0000255" key="1">
    <source>
        <dbReference type="HAMAP-Rule" id="MF_00003"/>
    </source>
</evidence>
<protein>
    <recommendedName>
        <fullName evidence="1">Ribosome-binding factor A</fullName>
    </recommendedName>
</protein>
<name>RBFA_BURCJ</name>
<sequence>MSRKRTSPNRNVQIADQIQRDLSELIMREVKDPRIGIVTIQSVELTPDYAHAKVYFTALTGDPDKTQEALNHASGHLHNLLFKRLHIHTVPTLHFHYDQTIEKAVEMSRLIKEANSTRAKDDDEAGAPAKDD</sequence>
<reference key="1">
    <citation type="journal article" date="2009" name="J. Bacteriol.">
        <title>The genome of Burkholderia cenocepacia J2315, an epidemic pathogen of cystic fibrosis patients.</title>
        <authorList>
            <person name="Holden M.T."/>
            <person name="Seth-Smith H.M."/>
            <person name="Crossman L.C."/>
            <person name="Sebaihia M."/>
            <person name="Bentley S.D."/>
            <person name="Cerdeno-Tarraga A.M."/>
            <person name="Thomson N.R."/>
            <person name="Bason N."/>
            <person name="Quail M.A."/>
            <person name="Sharp S."/>
            <person name="Cherevach I."/>
            <person name="Churcher C."/>
            <person name="Goodhead I."/>
            <person name="Hauser H."/>
            <person name="Holroyd N."/>
            <person name="Mungall K."/>
            <person name="Scott P."/>
            <person name="Walker D."/>
            <person name="White B."/>
            <person name="Rose H."/>
            <person name="Iversen P."/>
            <person name="Mil-Homens D."/>
            <person name="Rocha E.P."/>
            <person name="Fialho A.M."/>
            <person name="Baldwin A."/>
            <person name="Dowson C."/>
            <person name="Barrell B.G."/>
            <person name="Govan J.R."/>
            <person name="Vandamme P."/>
            <person name="Hart C.A."/>
            <person name="Mahenthiralingam E."/>
            <person name="Parkhill J."/>
        </authorList>
    </citation>
    <scope>NUCLEOTIDE SEQUENCE [LARGE SCALE GENOMIC DNA]</scope>
    <source>
        <strain>ATCC BAA-245 / DSM 16553 / LMG 16656 / NCTC 13227 / J2315 / CF5610</strain>
    </source>
</reference>
<proteinExistence type="inferred from homology"/>
<comment type="function">
    <text evidence="1">One of several proteins that assist in the late maturation steps of the functional core of the 30S ribosomal subunit. Associates with free 30S ribosomal subunits (but not with 30S subunits that are part of 70S ribosomes or polysomes). Required for efficient processing of 16S rRNA. May interact with the 5'-terminal helix region of 16S rRNA.</text>
</comment>
<comment type="subunit">
    <text evidence="1">Monomer. Binds 30S ribosomal subunits, but not 50S ribosomal subunits or 70S ribosomes.</text>
</comment>
<comment type="subcellular location">
    <subcellularLocation>
        <location evidence="1">Cytoplasm</location>
    </subcellularLocation>
</comment>
<comment type="similarity">
    <text evidence="1">Belongs to the RbfA family.</text>
</comment>
<accession>B4E7L2</accession>
<organism>
    <name type="scientific">Burkholderia cenocepacia (strain ATCC BAA-245 / DSM 16553 / LMG 16656 / NCTC 13227 / J2315 / CF5610)</name>
    <name type="common">Burkholderia cepacia (strain J2315)</name>
    <dbReference type="NCBI Taxonomy" id="216591"/>
    <lineage>
        <taxon>Bacteria</taxon>
        <taxon>Pseudomonadati</taxon>
        <taxon>Pseudomonadota</taxon>
        <taxon>Betaproteobacteria</taxon>
        <taxon>Burkholderiales</taxon>
        <taxon>Burkholderiaceae</taxon>
        <taxon>Burkholderia</taxon>
        <taxon>Burkholderia cepacia complex</taxon>
    </lineage>
</organism>
<keyword id="KW-0963">Cytoplasm</keyword>
<keyword id="KW-0690">Ribosome biogenesis</keyword>
<dbReference type="EMBL" id="AM747720">
    <property type="protein sequence ID" value="CAR51807.1"/>
    <property type="molecule type" value="Genomic_DNA"/>
</dbReference>
<dbReference type="RefSeq" id="WP_006490681.1">
    <property type="nucleotide sequence ID" value="NC_011000.1"/>
</dbReference>
<dbReference type="SMR" id="B4E7L2"/>
<dbReference type="GeneID" id="56558032"/>
<dbReference type="KEGG" id="bcj:BCAL1508"/>
<dbReference type="eggNOG" id="COG0858">
    <property type="taxonomic scope" value="Bacteria"/>
</dbReference>
<dbReference type="HOGENOM" id="CLU_089475_5_1_4"/>
<dbReference type="BioCyc" id="BCEN216591:G1G1V-1677-MONOMER"/>
<dbReference type="Proteomes" id="UP000001035">
    <property type="component" value="Chromosome 1"/>
</dbReference>
<dbReference type="GO" id="GO:0005829">
    <property type="term" value="C:cytosol"/>
    <property type="evidence" value="ECO:0007669"/>
    <property type="project" value="TreeGrafter"/>
</dbReference>
<dbReference type="GO" id="GO:0043024">
    <property type="term" value="F:ribosomal small subunit binding"/>
    <property type="evidence" value="ECO:0007669"/>
    <property type="project" value="TreeGrafter"/>
</dbReference>
<dbReference type="GO" id="GO:0030490">
    <property type="term" value="P:maturation of SSU-rRNA"/>
    <property type="evidence" value="ECO:0007669"/>
    <property type="project" value="UniProtKB-UniRule"/>
</dbReference>
<dbReference type="Gene3D" id="3.30.300.20">
    <property type="match status" value="1"/>
</dbReference>
<dbReference type="HAMAP" id="MF_00003">
    <property type="entry name" value="RbfA"/>
    <property type="match status" value="1"/>
</dbReference>
<dbReference type="InterPro" id="IPR015946">
    <property type="entry name" value="KH_dom-like_a/b"/>
</dbReference>
<dbReference type="InterPro" id="IPR000238">
    <property type="entry name" value="RbfA"/>
</dbReference>
<dbReference type="InterPro" id="IPR023799">
    <property type="entry name" value="RbfA_dom_sf"/>
</dbReference>
<dbReference type="NCBIfam" id="TIGR00082">
    <property type="entry name" value="rbfA"/>
    <property type="match status" value="1"/>
</dbReference>
<dbReference type="PANTHER" id="PTHR33515">
    <property type="entry name" value="RIBOSOME-BINDING FACTOR A, CHLOROPLASTIC-RELATED"/>
    <property type="match status" value="1"/>
</dbReference>
<dbReference type="PANTHER" id="PTHR33515:SF1">
    <property type="entry name" value="RIBOSOME-BINDING FACTOR A, CHLOROPLASTIC-RELATED"/>
    <property type="match status" value="1"/>
</dbReference>
<dbReference type="Pfam" id="PF02033">
    <property type="entry name" value="RBFA"/>
    <property type="match status" value="1"/>
</dbReference>
<dbReference type="SUPFAM" id="SSF89919">
    <property type="entry name" value="Ribosome-binding factor A, RbfA"/>
    <property type="match status" value="1"/>
</dbReference>
<gene>
    <name evidence="1" type="primary">rbfA</name>
    <name type="ordered locus">BceJ2315_14740</name>
    <name type="ORF">BCAL1508</name>
</gene>